<keyword id="KW-0328">Glycosyltransferase</keyword>
<keyword id="KW-1185">Reference proteome</keyword>
<keyword id="KW-0808">Transferase</keyword>
<gene>
    <name type="primary">TPS4</name>
    <name type="ordered locus">At4g27550</name>
    <name type="ORF">T29A15.40</name>
</gene>
<reference key="1">
    <citation type="journal article" date="1999" name="Nature">
        <title>Sequence and analysis of chromosome 4 of the plant Arabidopsis thaliana.</title>
        <authorList>
            <person name="Mayer K.F.X."/>
            <person name="Schueller C."/>
            <person name="Wambutt R."/>
            <person name="Murphy G."/>
            <person name="Volckaert G."/>
            <person name="Pohl T."/>
            <person name="Duesterhoeft A."/>
            <person name="Stiekema W."/>
            <person name="Entian K.-D."/>
            <person name="Terryn N."/>
            <person name="Harris B."/>
            <person name="Ansorge W."/>
            <person name="Brandt P."/>
            <person name="Grivell L.A."/>
            <person name="Rieger M."/>
            <person name="Weichselgartner M."/>
            <person name="de Simone V."/>
            <person name="Obermaier B."/>
            <person name="Mache R."/>
            <person name="Mueller M."/>
            <person name="Kreis M."/>
            <person name="Delseny M."/>
            <person name="Puigdomenech P."/>
            <person name="Watson M."/>
            <person name="Schmidtheini T."/>
            <person name="Reichert B."/>
            <person name="Portetelle D."/>
            <person name="Perez-Alonso M."/>
            <person name="Boutry M."/>
            <person name="Bancroft I."/>
            <person name="Vos P."/>
            <person name="Hoheisel J."/>
            <person name="Zimmermann W."/>
            <person name="Wedler H."/>
            <person name="Ridley P."/>
            <person name="Langham S.-A."/>
            <person name="McCullagh B."/>
            <person name="Bilham L."/>
            <person name="Robben J."/>
            <person name="van der Schueren J."/>
            <person name="Grymonprez B."/>
            <person name="Chuang Y.-J."/>
            <person name="Vandenbussche F."/>
            <person name="Braeken M."/>
            <person name="Weltjens I."/>
            <person name="Voet M."/>
            <person name="Bastiaens I."/>
            <person name="Aert R."/>
            <person name="Defoor E."/>
            <person name="Weitzenegger T."/>
            <person name="Bothe G."/>
            <person name="Ramsperger U."/>
            <person name="Hilbert H."/>
            <person name="Braun M."/>
            <person name="Holzer E."/>
            <person name="Brandt A."/>
            <person name="Peters S."/>
            <person name="van Staveren M."/>
            <person name="Dirkse W."/>
            <person name="Mooijman P."/>
            <person name="Klein Lankhorst R."/>
            <person name="Rose M."/>
            <person name="Hauf J."/>
            <person name="Koetter P."/>
            <person name="Berneiser S."/>
            <person name="Hempel S."/>
            <person name="Feldpausch M."/>
            <person name="Lamberth S."/>
            <person name="Van den Daele H."/>
            <person name="De Keyser A."/>
            <person name="Buysshaert C."/>
            <person name="Gielen J."/>
            <person name="Villarroel R."/>
            <person name="De Clercq R."/>
            <person name="van Montagu M."/>
            <person name="Rogers J."/>
            <person name="Cronin A."/>
            <person name="Quail M.A."/>
            <person name="Bray-Allen S."/>
            <person name="Clark L."/>
            <person name="Doggett J."/>
            <person name="Hall S."/>
            <person name="Kay M."/>
            <person name="Lennard N."/>
            <person name="McLay K."/>
            <person name="Mayes R."/>
            <person name="Pettett A."/>
            <person name="Rajandream M.A."/>
            <person name="Lyne M."/>
            <person name="Benes V."/>
            <person name="Rechmann S."/>
            <person name="Borkova D."/>
            <person name="Bloecker H."/>
            <person name="Scharfe M."/>
            <person name="Grimm M."/>
            <person name="Loehnert T.-H."/>
            <person name="Dose S."/>
            <person name="de Haan M."/>
            <person name="Maarse A.C."/>
            <person name="Schaefer M."/>
            <person name="Mueller-Auer S."/>
            <person name="Gabel C."/>
            <person name="Fuchs M."/>
            <person name="Fartmann B."/>
            <person name="Granderath K."/>
            <person name="Dauner D."/>
            <person name="Herzl A."/>
            <person name="Neumann S."/>
            <person name="Argiriou A."/>
            <person name="Vitale D."/>
            <person name="Liguori R."/>
            <person name="Piravandi E."/>
            <person name="Massenet O."/>
            <person name="Quigley F."/>
            <person name="Clabauld G."/>
            <person name="Muendlein A."/>
            <person name="Felber R."/>
            <person name="Schnabl S."/>
            <person name="Hiller R."/>
            <person name="Schmidt W."/>
            <person name="Lecharny A."/>
            <person name="Aubourg S."/>
            <person name="Chefdor F."/>
            <person name="Cooke R."/>
            <person name="Berger C."/>
            <person name="Monfort A."/>
            <person name="Casacuberta E."/>
            <person name="Gibbons T."/>
            <person name="Weber N."/>
            <person name="Vandenbol M."/>
            <person name="Bargues M."/>
            <person name="Terol J."/>
            <person name="Torres A."/>
            <person name="Perez-Perez A."/>
            <person name="Purnelle B."/>
            <person name="Bent E."/>
            <person name="Johnson S."/>
            <person name="Tacon D."/>
            <person name="Jesse T."/>
            <person name="Heijnen L."/>
            <person name="Schwarz S."/>
            <person name="Scholler P."/>
            <person name="Heber S."/>
            <person name="Francs P."/>
            <person name="Bielke C."/>
            <person name="Frishman D."/>
            <person name="Haase D."/>
            <person name="Lemcke K."/>
            <person name="Mewes H.-W."/>
            <person name="Stocker S."/>
            <person name="Zaccaria P."/>
            <person name="Bevan M."/>
            <person name="Wilson R.K."/>
            <person name="de la Bastide M."/>
            <person name="Habermann K."/>
            <person name="Parnell L."/>
            <person name="Dedhia N."/>
            <person name="Gnoj L."/>
            <person name="Schutz K."/>
            <person name="Huang E."/>
            <person name="Spiegel L."/>
            <person name="Sekhon M."/>
            <person name="Murray J."/>
            <person name="Sheet P."/>
            <person name="Cordes M."/>
            <person name="Abu-Threideh J."/>
            <person name="Stoneking T."/>
            <person name="Kalicki J."/>
            <person name="Graves T."/>
            <person name="Harmon G."/>
            <person name="Edwards J."/>
            <person name="Latreille P."/>
            <person name="Courtney L."/>
            <person name="Cloud J."/>
            <person name="Abbott A."/>
            <person name="Scott K."/>
            <person name="Johnson D."/>
            <person name="Minx P."/>
            <person name="Bentley D."/>
            <person name="Fulton B."/>
            <person name="Miller N."/>
            <person name="Greco T."/>
            <person name="Kemp K."/>
            <person name="Kramer J."/>
            <person name="Fulton L."/>
            <person name="Mardis E."/>
            <person name="Dante M."/>
            <person name="Pepin K."/>
            <person name="Hillier L.W."/>
            <person name="Nelson J."/>
            <person name="Spieth J."/>
            <person name="Ryan E."/>
            <person name="Andrews S."/>
            <person name="Geisel C."/>
            <person name="Layman D."/>
            <person name="Du H."/>
            <person name="Ali J."/>
            <person name="Berghoff A."/>
            <person name="Jones K."/>
            <person name="Drone K."/>
            <person name="Cotton M."/>
            <person name="Joshu C."/>
            <person name="Antonoiu B."/>
            <person name="Zidanic M."/>
            <person name="Strong C."/>
            <person name="Sun H."/>
            <person name="Lamar B."/>
            <person name="Yordan C."/>
            <person name="Ma P."/>
            <person name="Zhong J."/>
            <person name="Preston R."/>
            <person name="Vil D."/>
            <person name="Shekher M."/>
            <person name="Matero A."/>
            <person name="Shah R."/>
            <person name="Swaby I.K."/>
            <person name="O'Shaughnessy A."/>
            <person name="Rodriguez M."/>
            <person name="Hoffman J."/>
            <person name="Till S."/>
            <person name="Granat S."/>
            <person name="Shohdy N."/>
            <person name="Hasegawa A."/>
            <person name="Hameed A."/>
            <person name="Lodhi M."/>
            <person name="Johnson A."/>
            <person name="Chen E."/>
            <person name="Marra M.A."/>
            <person name="Martienssen R."/>
            <person name="McCombie W.R."/>
        </authorList>
    </citation>
    <scope>NUCLEOTIDE SEQUENCE [LARGE SCALE GENOMIC DNA]</scope>
    <source>
        <strain>cv. Columbia</strain>
    </source>
</reference>
<reference key="2">
    <citation type="journal article" date="2017" name="Plant J.">
        <title>Araport11: a complete reannotation of the Arabidopsis thaliana reference genome.</title>
        <authorList>
            <person name="Cheng C.Y."/>
            <person name="Krishnakumar V."/>
            <person name="Chan A.P."/>
            <person name="Thibaud-Nissen F."/>
            <person name="Schobel S."/>
            <person name="Town C.D."/>
        </authorList>
    </citation>
    <scope>GENOME REANNOTATION</scope>
    <source>
        <strain>cv. Columbia</strain>
    </source>
</reference>
<reference key="3">
    <citation type="journal article" date="2001" name="Trends Plant Sci.">
        <title>An unexpected plethora of trehalose biosynthesis genes in Arabidopsis thaliana.</title>
        <authorList>
            <person name="Leyman B."/>
            <person name="Van Dijck P."/>
            <person name="Thevelein J.M."/>
        </authorList>
    </citation>
    <scope>GENE FAMILY</scope>
    <scope>NOMENCLATURE</scope>
</reference>
<evidence type="ECO:0000305" key="1"/>
<feature type="chain" id="PRO_0000324825" description="Probable alpha,alpha-trehalose-phosphate synthase [UDP-forming] 4">
    <location>
        <begin position="1"/>
        <end position="795"/>
    </location>
</feature>
<feature type="region of interest" description="Glycosyltransferase">
    <location>
        <begin position="4"/>
        <end position="469"/>
    </location>
</feature>
<protein>
    <recommendedName>
        <fullName>Probable alpha,alpha-trehalose-phosphate synthase [UDP-forming] 4</fullName>
        <ecNumber>2.4.1.15</ecNumber>
    </recommendedName>
    <alternativeName>
        <fullName>Trehalose-6-phosphate synthase 4</fullName>
        <shortName>AtTPS4</shortName>
    </alternativeName>
</protein>
<accession>Q9T079</accession>
<name>TPS4_ARATH</name>
<proteinExistence type="inferred from homology"/>
<organism>
    <name type="scientific">Arabidopsis thaliana</name>
    <name type="common">Mouse-ear cress</name>
    <dbReference type="NCBI Taxonomy" id="3702"/>
    <lineage>
        <taxon>Eukaryota</taxon>
        <taxon>Viridiplantae</taxon>
        <taxon>Streptophyta</taxon>
        <taxon>Embryophyta</taxon>
        <taxon>Tracheophyta</taxon>
        <taxon>Spermatophyta</taxon>
        <taxon>Magnoliopsida</taxon>
        <taxon>eudicotyledons</taxon>
        <taxon>Gunneridae</taxon>
        <taxon>Pentapetalae</taxon>
        <taxon>rosids</taxon>
        <taxon>malvids</taxon>
        <taxon>Brassicales</taxon>
        <taxon>Brassicaceae</taxon>
        <taxon>Camelineae</taxon>
        <taxon>Arabidopsis</taxon>
    </lineage>
</organism>
<dbReference type="EC" id="2.4.1.15"/>
<dbReference type="EMBL" id="AL035602">
    <property type="protein sequence ID" value="CAB38267.1"/>
    <property type="molecule type" value="Genomic_DNA"/>
</dbReference>
<dbReference type="EMBL" id="AL161571">
    <property type="protein sequence ID" value="CAB81405.1"/>
    <property type="molecule type" value="Genomic_DNA"/>
</dbReference>
<dbReference type="EMBL" id="CP002687">
    <property type="protein sequence ID" value="AEE85356.1"/>
    <property type="molecule type" value="Genomic_DNA"/>
</dbReference>
<dbReference type="PIR" id="T05860">
    <property type="entry name" value="T05860"/>
</dbReference>
<dbReference type="RefSeq" id="NP_194485.1">
    <property type="nucleotide sequence ID" value="NM_118890.2"/>
</dbReference>
<dbReference type="SMR" id="Q9T079"/>
<dbReference type="FunCoup" id="Q9T079">
    <property type="interactions" value="879"/>
</dbReference>
<dbReference type="STRING" id="3702.Q9T079"/>
<dbReference type="CAZy" id="GT20">
    <property type="family name" value="Glycosyltransferase Family 20"/>
</dbReference>
<dbReference type="iPTMnet" id="Q9T079"/>
<dbReference type="PaxDb" id="3702-AT4G27550.1"/>
<dbReference type="ProteomicsDB" id="232501"/>
<dbReference type="EnsemblPlants" id="AT4G27550.1">
    <property type="protein sequence ID" value="AT4G27550.1"/>
    <property type="gene ID" value="AT4G27550"/>
</dbReference>
<dbReference type="GeneID" id="828864"/>
<dbReference type="Gramene" id="AT4G27550.1">
    <property type="protein sequence ID" value="AT4G27550.1"/>
    <property type="gene ID" value="AT4G27550"/>
</dbReference>
<dbReference type="KEGG" id="ath:AT4G27550"/>
<dbReference type="Araport" id="AT4G27550"/>
<dbReference type="TAIR" id="AT4G27550">
    <property type="gene designation" value="TPS4"/>
</dbReference>
<dbReference type="eggNOG" id="KOG1050">
    <property type="taxonomic scope" value="Eukaryota"/>
</dbReference>
<dbReference type="HOGENOM" id="CLU_002351_3_3_1"/>
<dbReference type="InParanoid" id="Q9T079"/>
<dbReference type="PhylomeDB" id="Q9T079"/>
<dbReference type="PRO" id="PR:Q9T079"/>
<dbReference type="Proteomes" id="UP000006548">
    <property type="component" value="Chromosome 4"/>
</dbReference>
<dbReference type="ExpressionAtlas" id="Q9T079">
    <property type="expression patterns" value="baseline and differential"/>
</dbReference>
<dbReference type="GO" id="GO:0003825">
    <property type="term" value="F:alpha,alpha-trehalose-phosphate synthase (UDP-forming) activity"/>
    <property type="evidence" value="ECO:0000250"/>
    <property type="project" value="TAIR"/>
</dbReference>
<dbReference type="GO" id="GO:0005992">
    <property type="term" value="P:trehalose biosynthetic process"/>
    <property type="evidence" value="ECO:0000250"/>
    <property type="project" value="TAIR"/>
</dbReference>
<dbReference type="CDD" id="cd03788">
    <property type="entry name" value="GT20_TPS"/>
    <property type="match status" value="1"/>
</dbReference>
<dbReference type="CDD" id="cd01627">
    <property type="entry name" value="HAD_TPP"/>
    <property type="match status" value="1"/>
</dbReference>
<dbReference type="FunFam" id="3.30.70.1020:FF:000001">
    <property type="entry name" value="Alpha,alpha-trehalose-phosphate synthase [UDP-forming] 1"/>
    <property type="match status" value="1"/>
</dbReference>
<dbReference type="FunFam" id="3.40.50.2000:FF:000046">
    <property type="entry name" value="alpha,alpha-trehalose-phosphate synthase [UDP-forming] 1"/>
    <property type="match status" value="1"/>
</dbReference>
<dbReference type="FunFam" id="3.40.50.2000:FF:000039">
    <property type="entry name" value="alpha,alpha-trehalose-phosphate synthase [UDP-forming] 1-like"/>
    <property type="match status" value="1"/>
</dbReference>
<dbReference type="FunFam" id="3.40.50.1000:FF:000351">
    <property type="entry name" value="Trehalose-6-phosphatase synthase S4"/>
    <property type="match status" value="1"/>
</dbReference>
<dbReference type="Gene3D" id="3.40.50.2000">
    <property type="entry name" value="Glycogen Phosphorylase B"/>
    <property type="match status" value="2"/>
</dbReference>
<dbReference type="Gene3D" id="3.40.50.1000">
    <property type="entry name" value="HAD superfamily/HAD-like"/>
    <property type="match status" value="1"/>
</dbReference>
<dbReference type="Gene3D" id="3.30.70.1020">
    <property type="entry name" value="Trehalose-6-phosphate phosphatase related protein, domain 2"/>
    <property type="match status" value="1"/>
</dbReference>
<dbReference type="InterPro" id="IPR001830">
    <property type="entry name" value="Glyco_trans_20"/>
</dbReference>
<dbReference type="InterPro" id="IPR036412">
    <property type="entry name" value="HAD-like_sf"/>
</dbReference>
<dbReference type="InterPro" id="IPR023214">
    <property type="entry name" value="HAD_sf"/>
</dbReference>
<dbReference type="InterPro" id="IPR003337">
    <property type="entry name" value="Trehalose_PPase"/>
</dbReference>
<dbReference type="NCBIfam" id="NF011071">
    <property type="entry name" value="PRK14501.1"/>
    <property type="match status" value="1"/>
</dbReference>
<dbReference type="PANTHER" id="PTHR10788:SF82">
    <property type="entry name" value="ALPHA,ALPHA-TREHALOSE-PHOSPHATE SYNTHASE [UDP-FORMING] 4-RELATED"/>
    <property type="match status" value="1"/>
</dbReference>
<dbReference type="PANTHER" id="PTHR10788">
    <property type="entry name" value="TREHALOSE-6-PHOSPHATE SYNTHASE"/>
    <property type="match status" value="1"/>
</dbReference>
<dbReference type="Pfam" id="PF00982">
    <property type="entry name" value="Glyco_transf_20"/>
    <property type="match status" value="1"/>
</dbReference>
<dbReference type="Pfam" id="PF02358">
    <property type="entry name" value="Trehalose_PPase"/>
    <property type="match status" value="1"/>
</dbReference>
<dbReference type="SUPFAM" id="SSF56784">
    <property type="entry name" value="HAD-like"/>
    <property type="match status" value="1"/>
</dbReference>
<dbReference type="SUPFAM" id="SSF53756">
    <property type="entry name" value="UDP-Glycosyltransferase/glycogen phosphorylase"/>
    <property type="match status" value="1"/>
</dbReference>
<sequence length="795" mass="89474">MARPRLLVVSMSLPVTAKRTGEESWSFTMSPGGLVSALLGLKEFETKWIGWPGVDVHDAIGKKTLSITLAEKGCIPVFLEEVCDQYYNGYCNNILWPIFHYLGTPPEYRNDATITYQSQYEAYKKANQIFFDVVKEHYEEGDVVWCHDYHVMLLPQYLKEYNSKMKVGWFLHTPFPSSEMYKTLPSRSDLLRSVLTADLVGFHTYDFARHFLNACMCILGVEATSEGIVDQGKVTRVAVFPIGIEPERFINTSELSEVVQYMKKFKNDFGGRKLILGVDRLDTIKGIPQKYQAFEKFLEENAEWRGKVMLLQIAVPTRNGIGEYQKIKDQCHYHVGRINGRFGSISSVPIIHLDCSIDFNQLCALYAITDVLLVTSLRDGMNLVSSEFIACQKAEKGVLILSEFAGAGQSLGAGAILVNPWNIKEVSSAIGEALNMSHEEKERKHKINFQYVKTHSTQQWADDFMKLTLTNILCSKLIEITTSAELGAGLAATLELPEHDVIQQYSKSNNRLLILGFYGTLTQPMKNQERRGDGMNLELHPQLKERLKELCSDPKTTVVVLSRSEKCILDKNFGEYNMWLAAENGMFLRHTSGEWVTRIPEHMNLEWIDGVKHVFKYFTERTPGSYLETSEASLVWNYENADAEFGRAQARDMLQHLWAGPISNASVDVVRGGQSVEVHAVGVTKGSAMERILGEIVHNKSMATPIDYVLCIGCFLGKDEDVYTFFEPELTKKAKSLSSSGSDSPKKVSSTIVDLKGENYFSVAIGQTHTKARYFLDSSDDVVKLIGKLCTHNNA</sequence>
<comment type="catalytic activity">
    <reaction>
        <text>D-glucose 6-phosphate + UDP-alpha-D-glucose = alpha,alpha-trehalose 6-phosphate + UDP + H(+)</text>
        <dbReference type="Rhea" id="RHEA:18889"/>
        <dbReference type="ChEBI" id="CHEBI:15378"/>
        <dbReference type="ChEBI" id="CHEBI:58223"/>
        <dbReference type="ChEBI" id="CHEBI:58429"/>
        <dbReference type="ChEBI" id="CHEBI:58885"/>
        <dbReference type="ChEBI" id="CHEBI:61548"/>
        <dbReference type="EC" id="2.4.1.15"/>
    </reaction>
</comment>
<comment type="similarity">
    <text evidence="1">In the N-terminal section; belongs to the glycosyltransferase 20 family.</text>
</comment>
<comment type="similarity">
    <text evidence="1">In the C-terminal section; belongs to the trehalose phosphatase family.</text>
</comment>